<organismHost>
    <name type="scientific">Saimiri boliviensis boliviensis</name>
    <name type="common">Bolivian squirrel monkey</name>
    <dbReference type="NCBI Taxonomy" id="39432"/>
</organismHost>
<name>LT_POVSM</name>
<keyword id="KW-0007">Acetylation</keyword>
<keyword id="KW-0025">Alternative splicing</keyword>
<keyword id="KW-0067">ATP-binding</keyword>
<keyword id="KW-0235">DNA replication</keyword>
<keyword id="KW-0238">DNA-binding</keyword>
<keyword id="KW-0244">Early protein</keyword>
<keyword id="KW-1078">G1/S host cell cycle checkpoint dysregulation by virus</keyword>
<keyword id="KW-0347">Helicase</keyword>
<keyword id="KW-1048">Host nucleus</keyword>
<keyword id="KW-0945">Host-virus interaction</keyword>
<keyword id="KW-0378">Hydrolase</keyword>
<keyword id="KW-1090">Inhibition of host innate immune response by virus</keyword>
<keyword id="KW-1114">Inhibition of host interferon signaling pathway by virus</keyword>
<keyword id="KW-1096">Inhibition of host JAK1 by virus</keyword>
<keyword id="KW-0922">Interferon antiviral system evasion</keyword>
<keyword id="KW-0413">Isomerase</keyword>
<keyword id="KW-0460">Magnesium</keyword>
<keyword id="KW-0479">Metal-binding</keyword>
<keyword id="KW-1121">Modulation of host cell cycle by virus</keyword>
<keyword id="KW-0547">Nucleotide-binding</keyword>
<keyword id="KW-0553">Oncogene</keyword>
<keyword id="KW-0597">Phosphoprotein</keyword>
<keyword id="KW-1185">Reference proteome</keyword>
<keyword id="KW-0899">Viral immunoevasion</keyword>
<keyword id="KW-0862">Zinc</keyword>
<keyword id="KW-0863">Zinc-finger</keyword>
<feature type="chain" id="PRO_0000356264" description="Large T antigen">
    <location>
        <begin position="1"/>
        <end position="655"/>
    </location>
</feature>
<feature type="domain" description="J">
    <location>
        <begin position="12"/>
        <end position="84"/>
    </location>
</feature>
<feature type="domain" description="SF3 helicase" evidence="2">
    <location>
        <begin position="411"/>
        <end position="570"/>
    </location>
</feature>
<feature type="DNA-binding region" description="T-ag OBD" evidence="3">
    <location>
        <begin position="149"/>
        <end position="264"/>
    </location>
</feature>
<feature type="zinc finger region" description="T-ag D1-type" evidence="4">
    <location>
        <begin position="274"/>
        <end position="366"/>
    </location>
</feature>
<feature type="region of interest" description="Disordered" evidence="5">
    <location>
        <begin position="110"/>
        <end position="145"/>
    </location>
</feature>
<feature type="short sequence motif" description="LXCXE motif" evidence="1">
    <location>
        <begin position="101"/>
        <end position="105"/>
    </location>
</feature>
<feature type="short sequence motif" description="Nuclear localization signal" evidence="1">
    <location>
        <begin position="135"/>
        <end position="142"/>
    </location>
</feature>
<feature type="binding site" evidence="4">
    <location>
        <position position="311"/>
    </location>
    <ligand>
        <name>Zn(2+)</name>
        <dbReference type="ChEBI" id="CHEBI:29105"/>
    </ligand>
</feature>
<feature type="binding site" evidence="4">
    <location>
        <position position="314"/>
    </location>
    <ligand>
        <name>Zn(2+)</name>
        <dbReference type="ChEBI" id="CHEBI:29105"/>
    </ligand>
</feature>
<feature type="binding site" evidence="4">
    <location>
        <position position="322"/>
    </location>
    <ligand>
        <name>Zn(2+)</name>
        <dbReference type="ChEBI" id="CHEBI:29105"/>
    </ligand>
</feature>
<feature type="binding site" evidence="4">
    <location>
        <position position="326"/>
    </location>
    <ligand>
        <name>Zn(2+)</name>
        <dbReference type="ChEBI" id="CHEBI:29105"/>
    </ligand>
</feature>
<feature type="binding site" evidence="2">
    <location>
        <begin position="437"/>
        <end position="444"/>
    </location>
    <ligand>
        <name>ATP</name>
        <dbReference type="ChEBI" id="CHEBI:30616"/>
    </ligand>
</feature>
<feature type="modified residue" description="N-acetylmethionine; by host" evidence="1">
    <location>
        <position position="1"/>
    </location>
</feature>
<feature type="modified residue" description="Phosphoserine; by host" evidence="1">
    <location>
        <position position="110"/>
    </location>
</feature>
<feature type="modified residue" description="Phosphothreonine; by host" evidence="1">
    <location>
        <position position="134"/>
    </location>
</feature>
<sequence>MDYTLTREESKLLMELLGLPMEQYGNFPLMRKAFLQKCKIMHPDKGGDEQTAKMLISLYKKLESEVKSLNTDDGFSTEEIPTYGSAEWEQWWQTFNEDFDLFCHETFTVSDDEEEGGEKRKHSDEEEPSCSQATPPKKKKTSSAPKDMPELLRNFLSNAILSNKTLTCFLVYTTLEKSSLLYSKLSEKFKPTFISRHKLDNEGLIFLITPSKHRVSAITNFCSNLCSVSFLIVKAVIKEYSCYCALCVEPFVLVVENIPGGLNSDFFDAPQEASKNVSWKLIGEYALSIMCDDLFLLLGLYKEFAVNPSTCSKCDQKVIVDHYKYHSLHYANAMLFTDCKNQKAICQQAVDGVLAFRRVQTAQLTRKQLLAKRFEYHFNKLEQVFSAKSEVCIETYMAGVCWFECLLPEVNMKNFILQYLECVVQNVPKKRFWCFTGPVNTGKTTLAAALLDLCGGKSLNVNMPFDKLNFELGVAIDQFTVVFEDVKGQSENKNLPTGQGISNLDNLRDYLDGAVKVNLEKKHLNKKTQIFPPGIVTANEYIFPLTLKVRFCKIIKFIYQQHLFKSLKKTELLTKHRVLQSGLTLLLLLVFHCDVEDFLSELHPLVTKWRENINHEVSWSRYLEMKENVMNGLNILEKQQDSGIFTQTQDTECQQ</sequence>
<proteinExistence type="inferred from homology"/>
<dbReference type="EC" id="5.6.2.4" evidence="1"/>
<dbReference type="EMBL" id="AM748741">
    <property type="protein sequence ID" value="CAO03083.2"/>
    <property type="molecule type" value="Genomic_DNA"/>
</dbReference>
<dbReference type="RefSeq" id="YP_001531349.1">
    <molecule id="A8Y984-1"/>
    <property type="nucleotide sequence ID" value="NC_009951.1"/>
</dbReference>
<dbReference type="SMR" id="A8Y984"/>
<dbReference type="GeneID" id="5714861"/>
<dbReference type="KEGG" id="vg:5714861"/>
<dbReference type="OrthoDB" id="14669at10239"/>
<dbReference type="Proteomes" id="UP000135044">
    <property type="component" value="Genome"/>
</dbReference>
<dbReference type="GO" id="GO:0042025">
    <property type="term" value="C:host cell nucleus"/>
    <property type="evidence" value="ECO:0007669"/>
    <property type="project" value="UniProtKB-SubCell"/>
</dbReference>
<dbReference type="GO" id="GO:0005524">
    <property type="term" value="F:ATP binding"/>
    <property type="evidence" value="ECO:0007669"/>
    <property type="project" value="UniProtKB-KW"/>
</dbReference>
<dbReference type="GO" id="GO:0016887">
    <property type="term" value="F:ATP hydrolysis activity"/>
    <property type="evidence" value="ECO:0007669"/>
    <property type="project" value="RHEA"/>
</dbReference>
<dbReference type="GO" id="GO:0003688">
    <property type="term" value="F:DNA replication origin binding"/>
    <property type="evidence" value="ECO:0007669"/>
    <property type="project" value="InterPro"/>
</dbReference>
<dbReference type="GO" id="GO:0004386">
    <property type="term" value="F:helicase activity"/>
    <property type="evidence" value="ECO:0007669"/>
    <property type="project" value="UniProtKB-KW"/>
</dbReference>
<dbReference type="GO" id="GO:0008270">
    <property type="term" value="F:zinc ion binding"/>
    <property type="evidence" value="ECO:0007669"/>
    <property type="project" value="UniProtKB-KW"/>
</dbReference>
<dbReference type="GO" id="GO:0006260">
    <property type="term" value="P:DNA replication"/>
    <property type="evidence" value="ECO:0007669"/>
    <property type="project" value="UniProtKB-KW"/>
</dbReference>
<dbReference type="GO" id="GO:0039645">
    <property type="term" value="P:symbiont-mediated perturbation of host cell cycle G1/S transition checkpoint"/>
    <property type="evidence" value="ECO:0007669"/>
    <property type="project" value="UniProtKB-KW"/>
</dbReference>
<dbReference type="GO" id="GO:0052170">
    <property type="term" value="P:symbiont-mediated suppression of host innate immune response"/>
    <property type="evidence" value="ECO:0007669"/>
    <property type="project" value="UniProtKB-KW"/>
</dbReference>
<dbReference type="GO" id="GO:0039576">
    <property type="term" value="P:symbiont-mediated suppression of host JAK-STAT cascade via inhibition of JAK1 activity"/>
    <property type="evidence" value="ECO:0007669"/>
    <property type="project" value="UniProtKB-KW"/>
</dbReference>
<dbReference type="GO" id="GO:0039502">
    <property type="term" value="P:symbiont-mediated suppression of host type I interferon-mediated signaling pathway"/>
    <property type="evidence" value="ECO:0007669"/>
    <property type="project" value="UniProtKB-KW"/>
</dbReference>
<dbReference type="Gene3D" id="3.40.1310.20">
    <property type="match status" value="1"/>
</dbReference>
<dbReference type="Gene3D" id="1.10.287.110">
    <property type="entry name" value="DnaJ domain"/>
    <property type="match status" value="1"/>
</dbReference>
<dbReference type="Gene3D" id="1.20.1050.70">
    <property type="entry name" value="Large T antigen, SV40, domain 3"/>
    <property type="match status" value="1"/>
</dbReference>
<dbReference type="Gene3D" id="3.40.50.300">
    <property type="entry name" value="P-loop containing nucleotide triphosphate hydrolases"/>
    <property type="match status" value="1"/>
</dbReference>
<dbReference type="Gene3D" id="1.10.10.510">
    <property type="entry name" value="Zinc finger, large T-antigen D1 domain"/>
    <property type="match status" value="1"/>
</dbReference>
<dbReference type="InterPro" id="IPR001623">
    <property type="entry name" value="DnaJ_domain"/>
</dbReference>
<dbReference type="InterPro" id="IPR014015">
    <property type="entry name" value="Helicase_SF3_DNA-vir"/>
</dbReference>
<dbReference type="InterPro" id="IPR036869">
    <property type="entry name" value="J_dom_sf"/>
</dbReference>
<dbReference type="InterPro" id="IPR016392">
    <property type="entry name" value="Lg_T_Ag_polyomavir"/>
</dbReference>
<dbReference type="InterPro" id="IPR010932">
    <property type="entry name" value="Lg_T_Ag_Polyomavir_C"/>
</dbReference>
<dbReference type="InterPro" id="IPR027417">
    <property type="entry name" value="P-loop_NTPase"/>
</dbReference>
<dbReference type="InterPro" id="IPR003133">
    <property type="entry name" value="T_Ag_DNA-bd"/>
</dbReference>
<dbReference type="InterPro" id="IPR017910">
    <property type="entry name" value="Znf_lg_T-Ag_D1-typ"/>
</dbReference>
<dbReference type="InterPro" id="IPR037102">
    <property type="entry name" value="Znf_lg_T-Ag_D1_dom_sf"/>
</dbReference>
<dbReference type="Pfam" id="PF06431">
    <property type="entry name" value="Polyoma_lg_T_C"/>
    <property type="match status" value="1"/>
</dbReference>
<dbReference type="Pfam" id="PF02217">
    <property type="entry name" value="T_Ag_DNA_bind"/>
    <property type="match status" value="1"/>
</dbReference>
<dbReference type="PIRSF" id="PIRSF003368">
    <property type="entry name" value="Large_T_antigen_polyomaV"/>
    <property type="match status" value="1"/>
</dbReference>
<dbReference type="SMART" id="SM00271">
    <property type="entry name" value="DnaJ"/>
    <property type="match status" value="1"/>
</dbReference>
<dbReference type="SUPFAM" id="SSF46565">
    <property type="entry name" value="Chaperone J-domain"/>
    <property type="match status" value="1"/>
</dbReference>
<dbReference type="SUPFAM" id="SSF55464">
    <property type="entry name" value="Origin of replication-binding domain, RBD-like"/>
    <property type="match status" value="1"/>
</dbReference>
<dbReference type="SUPFAM" id="SSF52540">
    <property type="entry name" value="P-loop containing nucleoside triphosphate hydrolases"/>
    <property type="match status" value="1"/>
</dbReference>
<dbReference type="PROSITE" id="PS51206">
    <property type="entry name" value="SF3_HELICASE_1"/>
    <property type="match status" value="1"/>
</dbReference>
<dbReference type="PROSITE" id="PS51287">
    <property type="entry name" value="T_AG_OBD"/>
    <property type="match status" value="1"/>
</dbReference>
<dbReference type="PROSITE" id="PS51341">
    <property type="entry name" value="ZF_LTAG_D1"/>
    <property type="match status" value="1"/>
</dbReference>
<accession>A8Y984</accession>
<reference key="1">
    <citation type="journal article" date="2008" name="J. Gen. Virol.">
        <title>Molecular characterization of the first polyomavirus from a New World primate: squirrel monkey polyomavirus.</title>
        <authorList>
            <person name="Verschoor E.J."/>
            <person name="Groenewoud M.J."/>
            <person name="Fagrouch Z."/>
            <person name="Kewalapat A."/>
            <person name="van Gessel S."/>
            <person name="Kik M.J."/>
            <person name="Heeney J.L."/>
        </authorList>
    </citation>
    <scope>NUCLEOTIDE SEQUENCE [GENOMIC DNA]</scope>
    <source>
        <strain>Squi0106</strain>
    </source>
</reference>
<evidence type="ECO:0000250" key="1">
    <source>
        <dbReference type="UniProtKB" id="P03070"/>
    </source>
</evidence>
<evidence type="ECO:0000255" key="2">
    <source>
        <dbReference type="PROSITE-ProRule" id="PRU00551"/>
    </source>
</evidence>
<evidence type="ECO:0000255" key="3">
    <source>
        <dbReference type="PROSITE-ProRule" id="PRU00620"/>
    </source>
</evidence>
<evidence type="ECO:0000255" key="4">
    <source>
        <dbReference type="PROSITE-ProRule" id="PRU00671"/>
    </source>
</evidence>
<evidence type="ECO:0000256" key="5">
    <source>
        <dbReference type="SAM" id="MobiDB-lite"/>
    </source>
</evidence>
<evidence type="ECO:0000305" key="6"/>
<gene>
    <name type="primary">large T</name>
</gene>
<organism>
    <name type="scientific">Squirrel monkey polyomavirus</name>
    <dbReference type="NCBI Taxonomy" id="452475"/>
    <lineage>
        <taxon>Viruses</taxon>
        <taxon>Monodnaviria</taxon>
        <taxon>Shotokuvirae</taxon>
        <taxon>Cossaviricota</taxon>
        <taxon>Papovaviricetes</taxon>
        <taxon>Sepolyvirales</taxon>
        <taxon>Polyomaviridae</taxon>
        <taxon>Betapolyomavirus</taxon>
        <taxon>Betapolyomavirus saboliviensis</taxon>
    </lineage>
</organism>
<comment type="function">
    <text evidence="1">Isoform large T antigen is a key early protein essential for both driving viral replication and inducing cellular transformation. Plays a role in viral genome replication by driving entry of quiescent cells into the cell cycle and by autoregulating the synthesis of viral early mRNA. Displays highly oncogenic activities by corrupting the host cellular checkpoint mechanisms that guard cell division and the transcription, replication, and repair of DNA. Participates in the modulation of cellular gene expression preceeding viral DNA replication. This step involves binding to host key cell cycle regulators retinoblastoma protein RB1/pRb and TP53. Induces the disassembly of host E2F1 transcription factors from RB1, thus promoting transcriptional activation of E2F1-regulated S-phase genes. Inhibits host TP53 binding to DNA, abrogating the ability of TP53 to stimulate gene expression. Plays the role of a TFIID-associated factor (TAF) in transcription initiation for all three RNA polymerases, by stabilizing the TBP-TFIIA complex on promoters. Initiates viral DNA replication and unwinding via interactions with the viral origin of replication. Binds two adjacent sites in the SV40 origin. The replication fork movement is facilitated by Large T antigen helicase activity. Has processive 3'-5' DNA helicase activity which requires a short 3' single-stranded region and ATP. Activates the transcription of viral late mRNA, through host TBP and TFIIA stabilization. Interferes with histone deacetylation mediated by HDAC1, leading to activation of transcription.</text>
</comment>
<comment type="catalytic activity">
    <reaction evidence="1">
        <text>Couples ATP hydrolysis with the unwinding of duplex DNA by translocating in the 3'-5' direction.</text>
        <dbReference type="EC" id="5.6.2.4"/>
    </reaction>
</comment>
<comment type="catalytic activity">
    <reaction evidence="1">
        <text>ATP + H2O = ADP + phosphate + H(+)</text>
        <dbReference type="Rhea" id="RHEA:13065"/>
        <dbReference type="ChEBI" id="CHEBI:15377"/>
        <dbReference type="ChEBI" id="CHEBI:15378"/>
        <dbReference type="ChEBI" id="CHEBI:30616"/>
        <dbReference type="ChEBI" id="CHEBI:43474"/>
        <dbReference type="ChEBI" id="CHEBI:456216"/>
        <dbReference type="EC" id="5.6.2.4"/>
    </reaction>
</comment>
<comment type="cofactor">
    <cofactor evidence="1">
        <name>Mg(2+)</name>
        <dbReference type="ChEBI" id="CHEBI:18420"/>
    </cofactor>
    <text evidence="1">DNA helicase activity requires Mg(2+).</text>
</comment>
<comment type="subunit">
    <text evidence="1">Forms homohexamers in the presence of ATP. Interacts with host HDAC1. Interacts (via LXCXE domain) with host RB1; the interaction induces the aberrant dissociation of RB1-E2F1 complex thereby disrupting RB1's activity. Interacts (via LXCXE domain) with host pRB-related proteins RBL1 and RBL2. Interacts (via C-terminus) with host TOP1 and POLA1 allowing DNA replication. Interacts with host TP53, inhibiting TP53 binding to DNA. Interacts with host preinitiation complex components TBP, TFIIA and TFIID to regulate transcription initiation.</text>
</comment>
<comment type="subcellular location">
    <subcellularLocation>
        <location evidence="1">Host nucleus</location>
    </subcellularLocation>
</comment>
<comment type="alternative products">
    <event type="alternative splicing"/>
    <isoform>
        <id>A8Y984-1</id>
        <name>Large T antigen</name>
        <sequence type="displayed"/>
    </isoform>
    <isoform>
        <id>A8Y985-1</id>
        <name>Small t antigen</name>
        <sequence type="external"/>
    </isoform>
</comment>
<comment type="domain">
    <text evidence="1">The J domain is essential for multiple viral activities, including virion assembly, viral DNA replication, transformation and transcriptional activation.</text>
</comment>
<comment type="domain">
    <text evidence="1">The LXCXE motif specifically binds to host pRB, RBL1, and RBL2.</text>
</comment>
<comment type="domain">
    <text evidence="1">The zinc finger region contributes to protein-protein interactions essential for the assembly of stable T-antigen hexamers at the origin of replication. The hexamers are required for subsequent alterations in the structure of origin DNA.</text>
</comment>
<comment type="domain">
    <text evidence="1">The ATP binding/ATPase domain is required for proper hexamer assembly and helicase activity.</text>
</comment>
<comment type="PTM">
    <text evidence="1">Phosphorylated on both serine and threonine residues. Small t antigen inhibits the dephosphorylation by the AC form of PP2A.</text>
</comment>
<comment type="PTM">
    <text evidence="1">O-Glycosylated near the C-terminal region.</text>
</comment>
<comment type="PTM">
    <text evidence="1">Acetylated by CBP in a TP53-dependent manner.</text>
</comment>
<protein>
    <recommendedName>
        <fullName>Large T antigen</fullName>
        <shortName>LT</shortName>
        <shortName>LT-AG</shortName>
        <ecNumber evidence="1">5.6.2.4</ecNumber>
    </recommendedName>
    <alternativeName>
        <fullName evidence="6">DNA 3'-5' helicase large T antigen</fullName>
    </alternativeName>
</protein>